<accession>B1YT08</accession>
<comment type="function">
    <text evidence="1">Catalyzes the conversion of 4-hydroxy-tetrahydrodipicolinate (HTPA) to tetrahydrodipicolinate.</text>
</comment>
<comment type="catalytic activity">
    <reaction evidence="1">
        <text>(S)-2,3,4,5-tetrahydrodipicolinate + NAD(+) + H2O = (2S,4S)-4-hydroxy-2,3,4,5-tetrahydrodipicolinate + NADH + H(+)</text>
        <dbReference type="Rhea" id="RHEA:35323"/>
        <dbReference type="ChEBI" id="CHEBI:15377"/>
        <dbReference type="ChEBI" id="CHEBI:15378"/>
        <dbReference type="ChEBI" id="CHEBI:16845"/>
        <dbReference type="ChEBI" id="CHEBI:57540"/>
        <dbReference type="ChEBI" id="CHEBI:57945"/>
        <dbReference type="ChEBI" id="CHEBI:67139"/>
        <dbReference type="EC" id="1.17.1.8"/>
    </reaction>
</comment>
<comment type="catalytic activity">
    <reaction evidence="1">
        <text>(S)-2,3,4,5-tetrahydrodipicolinate + NADP(+) + H2O = (2S,4S)-4-hydroxy-2,3,4,5-tetrahydrodipicolinate + NADPH + H(+)</text>
        <dbReference type="Rhea" id="RHEA:35331"/>
        <dbReference type="ChEBI" id="CHEBI:15377"/>
        <dbReference type="ChEBI" id="CHEBI:15378"/>
        <dbReference type="ChEBI" id="CHEBI:16845"/>
        <dbReference type="ChEBI" id="CHEBI:57783"/>
        <dbReference type="ChEBI" id="CHEBI:58349"/>
        <dbReference type="ChEBI" id="CHEBI:67139"/>
        <dbReference type="EC" id="1.17.1.8"/>
    </reaction>
</comment>
<comment type="pathway">
    <text evidence="1">Amino-acid biosynthesis; L-lysine biosynthesis via DAP pathway; (S)-tetrahydrodipicolinate from L-aspartate: step 4/4.</text>
</comment>
<comment type="subcellular location">
    <subcellularLocation>
        <location evidence="1">Cytoplasm</location>
    </subcellularLocation>
</comment>
<comment type="similarity">
    <text evidence="1">Belongs to the DapB family.</text>
</comment>
<comment type="caution">
    <text evidence="2">Was originally thought to be a dihydrodipicolinate reductase (DHDPR), catalyzing the conversion of dihydrodipicolinate to tetrahydrodipicolinate. However, it was shown in E.coli that the substrate of the enzymatic reaction is not dihydrodipicolinate (DHDP) but in fact (2S,4S)-4-hydroxy-2,3,4,5-tetrahydrodipicolinic acid (HTPA), the product released by the DapA-catalyzed reaction.</text>
</comment>
<dbReference type="EC" id="1.17.1.8" evidence="1"/>
<dbReference type="EMBL" id="CP001025">
    <property type="protein sequence ID" value="ACB63069.1"/>
    <property type="molecule type" value="Genomic_DNA"/>
</dbReference>
<dbReference type="RefSeq" id="WP_012363080.1">
    <property type="nucleotide sequence ID" value="NC_010551.1"/>
</dbReference>
<dbReference type="SMR" id="B1YT08"/>
<dbReference type="KEGG" id="bac:BamMC406_0572"/>
<dbReference type="HOGENOM" id="CLU_047479_2_1_4"/>
<dbReference type="OrthoDB" id="9790352at2"/>
<dbReference type="UniPathway" id="UPA00034">
    <property type="reaction ID" value="UER00018"/>
</dbReference>
<dbReference type="Proteomes" id="UP000001680">
    <property type="component" value="Chromosome 1"/>
</dbReference>
<dbReference type="GO" id="GO:0005829">
    <property type="term" value="C:cytosol"/>
    <property type="evidence" value="ECO:0007669"/>
    <property type="project" value="TreeGrafter"/>
</dbReference>
<dbReference type="GO" id="GO:0008839">
    <property type="term" value="F:4-hydroxy-tetrahydrodipicolinate reductase"/>
    <property type="evidence" value="ECO:0007669"/>
    <property type="project" value="UniProtKB-EC"/>
</dbReference>
<dbReference type="GO" id="GO:0051287">
    <property type="term" value="F:NAD binding"/>
    <property type="evidence" value="ECO:0007669"/>
    <property type="project" value="UniProtKB-UniRule"/>
</dbReference>
<dbReference type="GO" id="GO:0050661">
    <property type="term" value="F:NADP binding"/>
    <property type="evidence" value="ECO:0007669"/>
    <property type="project" value="UniProtKB-UniRule"/>
</dbReference>
<dbReference type="GO" id="GO:0016726">
    <property type="term" value="F:oxidoreductase activity, acting on CH or CH2 groups, NAD or NADP as acceptor"/>
    <property type="evidence" value="ECO:0007669"/>
    <property type="project" value="UniProtKB-UniRule"/>
</dbReference>
<dbReference type="GO" id="GO:0019877">
    <property type="term" value="P:diaminopimelate biosynthetic process"/>
    <property type="evidence" value="ECO:0007669"/>
    <property type="project" value="UniProtKB-UniRule"/>
</dbReference>
<dbReference type="GO" id="GO:0009089">
    <property type="term" value="P:lysine biosynthetic process via diaminopimelate"/>
    <property type="evidence" value="ECO:0007669"/>
    <property type="project" value="UniProtKB-UniRule"/>
</dbReference>
<dbReference type="CDD" id="cd02274">
    <property type="entry name" value="DHDPR_N"/>
    <property type="match status" value="1"/>
</dbReference>
<dbReference type="FunFam" id="3.30.360.10:FF:000004">
    <property type="entry name" value="4-hydroxy-tetrahydrodipicolinate reductase"/>
    <property type="match status" value="1"/>
</dbReference>
<dbReference type="FunFam" id="3.40.50.720:FF:000048">
    <property type="entry name" value="4-hydroxy-tetrahydrodipicolinate reductase"/>
    <property type="match status" value="1"/>
</dbReference>
<dbReference type="Gene3D" id="3.30.360.10">
    <property type="entry name" value="Dihydrodipicolinate Reductase, domain 2"/>
    <property type="match status" value="1"/>
</dbReference>
<dbReference type="Gene3D" id="3.40.50.720">
    <property type="entry name" value="NAD(P)-binding Rossmann-like Domain"/>
    <property type="match status" value="1"/>
</dbReference>
<dbReference type="HAMAP" id="MF_00102">
    <property type="entry name" value="DapB"/>
    <property type="match status" value="1"/>
</dbReference>
<dbReference type="InterPro" id="IPR022663">
    <property type="entry name" value="DapB_C"/>
</dbReference>
<dbReference type="InterPro" id="IPR000846">
    <property type="entry name" value="DapB_N"/>
</dbReference>
<dbReference type="InterPro" id="IPR022664">
    <property type="entry name" value="DapB_N_CS"/>
</dbReference>
<dbReference type="InterPro" id="IPR023940">
    <property type="entry name" value="DHDPR_bac"/>
</dbReference>
<dbReference type="InterPro" id="IPR036291">
    <property type="entry name" value="NAD(P)-bd_dom_sf"/>
</dbReference>
<dbReference type="NCBIfam" id="TIGR00036">
    <property type="entry name" value="dapB"/>
    <property type="match status" value="1"/>
</dbReference>
<dbReference type="PANTHER" id="PTHR20836:SF0">
    <property type="entry name" value="4-HYDROXY-TETRAHYDRODIPICOLINATE REDUCTASE 1, CHLOROPLASTIC-RELATED"/>
    <property type="match status" value="1"/>
</dbReference>
<dbReference type="PANTHER" id="PTHR20836">
    <property type="entry name" value="DIHYDRODIPICOLINATE REDUCTASE"/>
    <property type="match status" value="1"/>
</dbReference>
<dbReference type="Pfam" id="PF05173">
    <property type="entry name" value="DapB_C"/>
    <property type="match status" value="1"/>
</dbReference>
<dbReference type="Pfam" id="PF01113">
    <property type="entry name" value="DapB_N"/>
    <property type="match status" value="1"/>
</dbReference>
<dbReference type="PIRSF" id="PIRSF000161">
    <property type="entry name" value="DHPR"/>
    <property type="match status" value="1"/>
</dbReference>
<dbReference type="SUPFAM" id="SSF55347">
    <property type="entry name" value="Glyceraldehyde-3-phosphate dehydrogenase-like, C-terminal domain"/>
    <property type="match status" value="1"/>
</dbReference>
<dbReference type="SUPFAM" id="SSF51735">
    <property type="entry name" value="NAD(P)-binding Rossmann-fold domains"/>
    <property type="match status" value="1"/>
</dbReference>
<dbReference type="PROSITE" id="PS01298">
    <property type="entry name" value="DAPB"/>
    <property type="match status" value="1"/>
</dbReference>
<name>DAPB_BURA4</name>
<organism>
    <name type="scientific">Burkholderia ambifaria (strain MC40-6)</name>
    <dbReference type="NCBI Taxonomy" id="398577"/>
    <lineage>
        <taxon>Bacteria</taxon>
        <taxon>Pseudomonadati</taxon>
        <taxon>Pseudomonadota</taxon>
        <taxon>Betaproteobacteria</taxon>
        <taxon>Burkholderiales</taxon>
        <taxon>Burkholderiaceae</taxon>
        <taxon>Burkholderia</taxon>
        <taxon>Burkholderia cepacia complex</taxon>
    </lineage>
</organism>
<keyword id="KW-0028">Amino-acid biosynthesis</keyword>
<keyword id="KW-0963">Cytoplasm</keyword>
<keyword id="KW-0220">Diaminopimelate biosynthesis</keyword>
<keyword id="KW-0457">Lysine biosynthesis</keyword>
<keyword id="KW-0520">NAD</keyword>
<keyword id="KW-0521">NADP</keyword>
<keyword id="KW-0560">Oxidoreductase</keyword>
<sequence>MKIAIAGASGRMGRMLIEAVLNDSDAQLVGALDRAGSPFLGQDAGAFLGKETGVKLTDDLDAVFAQADYLIDFTRPEGTIAHVAAALRHDVKLVIGTTGFTAEQKAELQAAAARIGIVFAANMSVGVNVTLKLLEFAAKHFSHGYDIEIIEAHHRHKVDAPSGTALMMGEAVAGALGRSLEDCAVYGRHGVTGERDPSTIGFAAVRGGDIVGDHTVLFAGIGERIEITHKSSSRVSYAQGALRAVRFLSARGAGLFDMQDVLGLR</sequence>
<feature type="chain" id="PRO_1000093946" description="4-hydroxy-tetrahydrodipicolinate reductase">
    <location>
        <begin position="1"/>
        <end position="265"/>
    </location>
</feature>
<feature type="active site" description="Proton donor/acceptor" evidence="1">
    <location>
        <position position="153"/>
    </location>
</feature>
<feature type="active site" description="Proton donor" evidence="1">
    <location>
        <position position="157"/>
    </location>
</feature>
<feature type="binding site" evidence="1">
    <location>
        <begin position="7"/>
        <end position="12"/>
    </location>
    <ligand>
        <name>NAD(+)</name>
        <dbReference type="ChEBI" id="CHEBI:57540"/>
    </ligand>
</feature>
<feature type="binding site" evidence="1">
    <location>
        <position position="33"/>
    </location>
    <ligand>
        <name>NAD(+)</name>
        <dbReference type="ChEBI" id="CHEBI:57540"/>
    </ligand>
</feature>
<feature type="binding site" evidence="1">
    <location>
        <position position="34"/>
    </location>
    <ligand>
        <name>NADP(+)</name>
        <dbReference type="ChEBI" id="CHEBI:58349"/>
    </ligand>
</feature>
<feature type="binding site" evidence="1">
    <location>
        <begin position="96"/>
        <end position="98"/>
    </location>
    <ligand>
        <name>NAD(+)</name>
        <dbReference type="ChEBI" id="CHEBI:57540"/>
    </ligand>
</feature>
<feature type="binding site" evidence="1">
    <location>
        <begin position="120"/>
        <end position="123"/>
    </location>
    <ligand>
        <name>NAD(+)</name>
        <dbReference type="ChEBI" id="CHEBI:57540"/>
    </ligand>
</feature>
<feature type="binding site" evidence="1">
    <location>
        <position position="154"/>
    </location>
    <ligand>
        <name>(S)-2,3,4,5-tetrahydrodipicolinate</name>
        <dbReference type="ChEBI" id="CHEBI:16845"/>
    </ligand>
</feature>
<feature type="binding site" evidence="1">
    <location>
        <begin position="163"/>
        <end position="164"/>
    </location>
    <ligand>
        <name>(S)-2,3,4,5-tetrahydrodipicolinate</name>
        <dbReference type="ChEBI" id="CHEBI:16845"/>
    </ligand>
</feature>
<protein>
    <recommendedName>
        <fullName evidence="1">4-hydroxy-tetrahydrodipicolinate reductase</fullName>
        <shortName evidence="1">HTPA reductase</shortName>
        <ecNumber evidence="1">1.17.1.8</ecNumber>
    </recommendedName>
</protein>
<evidence type="ECO:0000255" key="1">
    <source>
        <dbReference type="HAMAP-Rule" id="MF_00102"/>
    </source>
</evidence>
<evidence type="ECO:0000305" key="2"/>
<reference key="1">
    <citation type="submission" date="2008-04" db="EMBL/GenBank/DDBJ databases">
        <title>Complete sequence of chromosome 1 of Burkholderia ambifaria MC40-6.</title>
        <authorList>
            <person name="Copeland A."/>
            <person name="Lucas S."/>
            <person name="Lapidus A."/>
            <person name="Glavina del Rio T."/>
            <person name="Dalin E."/>
            <person name="Tice H."/>
            <person name="Pitluck S."/>
            <person name="Chain P."/>
            <person name="Malfatti S."/>
            <person name="Shin M."/>
            <person name="Vergez L."/>
            <person name="Lang D."/>
            <person name="Schmutz J."/>
            <person name="Larimer F."/>
            <person name="Land M."/>
            <person name="Hauser L."/>
            <person name="Kyrpides N."/>
            <person name="Lykidis A."/>
            <person name="Ramette A."/>
            <person name="Konstantinidis K."/>
            <person name="Tiedje J."/>
            <person name="Richardson P."/>
        </authorList>
    </citation>
    <scope>NUCLEOTIDE SEQUENCE [LARGE SCALE GENOMIC DNA]</scope>
    <source>
        <strain>MC40-6</strain>
    </source>
</reference>
<proteinExistence type="inferred from homology"/>
<gene>
    <name evidence="1" type="primary">dapB</name>
    <name type="ordered locus">BamMC406_0572</name>
</gene>